<comment type="function">
    <text evidence="1">Catalyzes the conversion of urocanate to 4-imidazolone-5-propionate.</text>
</comment>
<comment type="catalytic activity">
    <reaction evidence="1">
        <text>4-imidazolone-5-propanoate = trans-urocanate + H2O</text>
        <dbReference type="Rhea" id="RHEA:13101"/>
        <dbReference type="ChEBI" id="CHEBI:15377"/>
        <dbReference type="ChEBI" id="CHEBI:17771"/>
        <dbReference type="ChEBI" id="CHEBI:77893"/>
        <dbReference type="EC" id="4.2.1.49"/>
    </reaction>
</comment>
<comment type="cofactor">
    <cofactor evidence="1">
        <name>NAD(+)</name>
        <dbReference type="ChEBI" id="CHEBI:57540"/>
    </cofactor>
    <text evidence="1">Binds 1 NAD(+) per subunit.</text>
</comment>
<comment type="pathway">
    <text evidence="1">Amino-acid degradation; L-histidine degradation into L-glutamate; N-formimidoyl-L-glutamate from L-histidine: step 2/3.</text>
</comment>
<comment type="subcellular location">
    <subcellularLocation>
        <location evidence="1">Cytoplasm</location>
    </subcellularLocation>
</comment>
<comment type="similarity">
    <text evidence="1">Belongs to the urocanase family.</text>
</comment>
<gene>
    <name evidence="1" type="primary">hutU</name>
    <name type="ordered locus">VV1951</name>
</gene>
<evidence type="ECO:0000255" key="1">
    <source>
        <dbReference type="HAMAP-Rule" id="MF_00577"/>
    </source>
</evidence>
<feature type="chain" id="PRO_0000207366" description="Urocanate hydratase">
    <location>
        <begin position="1"/>
        <end position="565"/>
    </location>
</feature>
<feature type="active site" evidence="1">
    <location>
        <position position="413"/>
    </location>
</feature>
<feature type="binding site" evidence="1">
    <location>
        <begin position="58"/>
        <end position="59"/>
    </location>
    <ligand>
        <name>NAD(+)</name>
        <dbReference type="ChEBI" id="CHEBI:57540"/>
    </ligand>
</feature>
<feature type="binding site" evidence="1">
    <location>
        <position position="136"/>
    </location>
    <ligand>
        <name>NAD(+)</name>
        <dbReference type="ChEBI" id="CHEBI:57540"/>
    </ligand>
</feature>
<feature type="binding site" evidence="1">
    <location>
        <begin position="182"/>
        <end position="184"/>
    </location>
    <ligand>
        <name>NAD(+)</name>
        <dbReference type="ChEBI" id="CHEBI:57540"/>
    </ligand>
</feature>
<feature type="binding site" evidence="1">
    <location>
        <position position="202"/>
    </location>
    <ligand>
        <name>NAD(+)</name>
        <dbReference type="ChEBI" id="CHEBI:57540"/>
    </ligand>
</feature>
<feature type="binding site" evidence="1">
    <location>
        <position position="207"/>
    </location>
    <ligand>
        <name>NAD(+)</name>
        <dbReference type="ChEBI" id="CHEBI:57540"/>
    </ligand>
</feature>
<feature type="binding site" evidence="1">
    <location>
        <begin position="245"/>
        <end position="246"/>
    </location>
    <ligand>
        <name>NAD(+)</name>
        <dbReference type="ChEBI" id="CHEBI:57540"/>
    </ligand>
</feature>
<feature type="binding site" evidence="1">
    <location>
        <begin position="266"/>
        <end position="270"/>
    </location>
    <ligand>
        <name>NAD(+)</name>
        <dbReference type="ChEBI" id="CHEBI:57540"/>
    </ligand>
</feature>
<feature type="binding site" evidence="1">
    <location>
        <begin position="276"/>
        <end position="277"/>
    </location>
    <ligand>
        <name>NAD(+)</name>
        <dbReference type="ChEBI" id="CHEBI:57540"/>
    </ligand>
</feature>
<feature type="binding site" evidence="1">
    <location>
        <position position="325"/>
    </location>
    <ligand>
        <name>NAD(+)</name>
        <dbReference type="ChEBI" id="CHEBI:57540"/>
    </ligand>
</feature>
<feature type="binding site" evidence="1">
    <location>
        <position position="495"/>
    </location>
    <ligand>
        <name>NAD(+)</name>
        <dbReference type="ChEBI" id="CHEBI:57540"/>
    </ligand>
</feature>
<organism>
    <name type="scientific">Vibrio vulnificus (strain YJ016)</name>
    <dbReference type="NCBI Taxonomy" id="196600"/>
    <lineage>
        <taxon>Bacteria</taxon>
        <taxon>Pseudomonadati</taxon>
        <taxon>Pseudomonadota</taxon>
        <taxon>Gammaproteobacteria</taxon>
        <taxon>Vibrionales</taxon>
        <taxon>Vibrionaceae</taxon>
        <taxon>Vibrio</taxon>
    </lineage>
</organism>
<accession>Q7MK59</accession>
<proteinExistence type="inferred from homology"/>
<keyword id="KW-0963">Cytoplasm</keyword>
<keyword id="KW-0369">Histidine metabolism</keyword>
<keyword id="KW-0456">Lyase</keyword>
<keyword id="KW-0520">NAD</keyword>
<protein>
    <recommendedName>
        <fullName evidence="1">Urocanate hydratase</fullName>
        <shortName evidence="1">Urocanase</shortName>
        <ecNumber evidence="1">4.2.1.49</ecNumber>
    </recommendedName>
    <alternativeName>
        <fullName evidence="1">Imidazolonepropionate hydrolase</fullName>
    </alternativeName>
</protein>
<name>HUTU_VIBVY</name>
<dbReference type="EC" id="4.2.1.49" evidence="1"/>
<dbReference type="EMBL" id="BA000037">
    <property type="protein sequence ID" value="BAC94715.1"/>
    <property type="molecule type" value="Genomic_DNA"/>
</dbReference>
<dbReference type="RefSeq" id="WP_011150506.1">
    <property type="nucleotide sequence ID" value="NC_005139.1"/>
</dbReference>
<dbReference type="SMR" id="Q7MK59"/>
<dbReference type="STRING" id="672.VV93_v1c17110"/>
<dbReference type="KEGG" id="vvy:VV1951"/>
<dbReference type="PATRIC" id="fig|196600.6.peg.1979"/>
<dbReference type="eggNOG" id="COG2987">
    <property type="taxonomic scope" value="Bacteria"/>
</dbReference>
<dbReference type="HOGENOM" id="CLU_018868_0_1_6"/>
<dbReference type="UniPathway" id="UPA00379">
    <property type="reaction ID" value="UER00550"/>
</dbReference>
<dbReference type="Proteomes" id="UP000002675">
    <property type="component" value="Chromosome I"/>
</dbReference>
<dbReference type="GO" id="GO:0005737">
    <property type="term" value="C:cytoplasm"/>
    <property type="evidence" value="ECO:0007669"/>
    <property type="project" value="UniProtKB-SubCell"/>
</dbReference>
<dbReference type="GO" id="GO:0016153">
    <property type="term" value="F:urocanate hydratase activity"/>
    <property type="evidence" value="ECO:0007669"/>
    <property type="project" value="UniProtKB-UniRule"/>
</dbReference>
<dbReference type="GO" id="GO:0019556">
    <property type="term" value="P:L-histidine catabolic process to glutamate and formamide"/>
    <property type="evidence" value="ECO:0007669"/>
    <property type="project" value="UniProtKB-UniPathway"/>
</dbReference>
<dbReference type="GO" id="GO:0019557">
    <property type="term" value="P:L-histidine catabolic process to glutamate and formate"/>
    <property type="evidence" value="ECO:0007669"/>
    <property type="project" value="UniProtKB-UniPathway"/>
</dbReference>
<dbReference type="FunFam" id="3.40.50.10730:FF:000001">
    <property type="entry name" value="Urocanate hydratase"/>
    <property type="match status" value="1"/>
</dbReference>
<dbReference type="Gene3D" id="3.40.50.10730">
    <property type="entry name" value="Urocanase like domains"/>
    <property type="match status" value="1"/>
</dbReference>
<dbReference type="Gene3D" id="3.40.1770.10">
    <property type="entry name" value="Urocanase superfamily"/>
    <property type="match status" value="1"/>
</dbReference>
<dbReference type="HAMAP" id="MF_00577">
    <property type="entry name" value="HutU"/>
    <property type="match status" value="1"/>
</dbReference>
<dbReference type="InterPro" id="IPR055351">
    <property type="entry name" value="Urocanase"/>
</dbReference>
<dbReference type="InterPro" id="IPR023637">
    <property type="entry name" value="Urocanase-like"/>
</dbReference>
<dbReference type="InterPro" id="IPR035401">
    <property type="entry name" value="Urocanase_C"/>
</dbReference>
<dbReference type="InterPro" id="IPR038364">
    <property type="entry name" value="Urocanase_central_sf"/>
</dbReference>
<dbReference type="InterPro" id="IPR023636">
    <property type="entry name" value="Urocanase_CS"/>
</dbReference>
<dbReference type="InterPro" id="IPR035400">
    <property type="entry name" value="Urocanase_N"/>
</dbReference>
<dbReference type="InterPro" id="IPR035085">
    <property type="entry name" value="Urocanase_Rossmann-like"/>
</dbReference>
<dbReference type="InterPro" id="IPR036190">
    <property type="entry name" value="Urocanase_sf"/>
</dbReference>
<dbReference type="NCBIfam" id="TIGR01228">
    <property type="entry name" value="hutU"/>
    <property type="match status" value="1"/>
</dbReference>
<dbReference type="NCBIfam" id="NF003820">
    <property type="entry name" value="PRK05414.1"/>
    <property type="match status" value="1"/>
</dbReference>
<dbReference type="PANTHER" id="PTHR12216">
    <property type="entry name" value="UROCANATE HYDRATASE"/>
    <property type="match status" value="1"/>
</dbReference>
<dbReference type="PANTHER" id="PTHR12216:SF4">
    <property type="entry name" value="UROCANATE HYDRATASE"/>
    <property type="match status" value="1"/>
</dbReference>
<dbReference type="Pfam" id="PF01175">
    <property type="entry name" value="Urocanase"/>
    <property type="match status" value="1"/>
</dbReference>
<dbReference type="Pfam" id="PF17392">
    <property type="entry name" value="Urocanase_C"/>
    <property type="match status" value="1"/>
</dbReference>
<dbReference type="Pfam" id="PF17391">
    <property type="entry name" value="Urocanase_N"/>
    <property type="match status" value="1"/>
</dbReference>
<dbReference type="PIRSF" id="PIRSF001423">
    <property type="entry name" value="Urocanate_hydrat"/>
    <property type="match status" value="1"/>
</dbReference>
<dbReference type="SUPFAM" id="SSF111326">
    <property type="entry name" value="Urocanase"/>
    <property type="match status" value="1"/>
</dbReference>
<dbReference type="PROSITE" id="PS01233">
    <property type="entry name" value="UROCANASE"/>
    <property type="match status" value="1"/>
</dbReference>
<reference key="1">
    <citation type="journal article" date="2003" name="Genome Res.">
        <title>Comparative genome analysis of Vibrio vulnificus, a marine pathogen.</title>
        <authorList>
            <person name="Chen C.-Y."/>
            <person name="Wu K.-M."/>
            <person name="Chang Y.-C."/>
            <person name="Chang C.-H."/>
            <person name="Tsai H.-C."/>
            <person name="Liao T.-L."/>
            <person name="Liu Y.-M."/>
            <person name="Chen H.-J."/>
            <person name="Shen A.B.-T."/>
            <person name="Li J.-C."/>
            <person name="Su T.-L."/>
            <person name="Shao C.-P."/>
            <person name="Lee C.-T."/>
            <person name="Hor L.-I."/>
            <person name="Tsai S.-F."/>
        </authorList>
    </citation>
    <scope>NUCLEOTIDE SEQUENCE [LARGE SCALE GENOMIC DNA]</scope>
    <source>
        <strain>YJ016</strain>
    </source>
</reference>
<sequence length="565" mass="61602">MTQSQGQDPRLDTSRTIRAPHGTTLRAKSWLTEAPLRMLMNNLDPDVAEHPHALVVYGGIGRAARNWACFDKIVEVLERLEDDQTLLVQSGKPVGVFPTHKNAPRVLIANSNLVPHWANWEHFNELDKQGLMMYGQMTAGSWIYIGSQGIVQGTYETFVAVAKKHFAGEAKGRWVLTGGLGGMGGAQPLAATMAGFSMIAVECDESRIDYRLRTGYVDKKATTLDEALAIVKESDTPVSVGLLGNAADVFAELVERNITPDIVTDQTSAHDPLNGYLPQGWSMAYAAEMRQQDESAVVKAAKQSMAVQVKAMLALQTRGAATLDYGNNIRQMALEEGVENAFDFPGFVPAYIRPLFCEGIGPFRWAALSGDPEDIYKTDQKVKELIPDNPHLHNWLDMARERIQFQGLPARICWVGLKDRERLGQAFNEMVKNGELKAPIVIGRDHLDSGSVASPNRETEGMMDGSDAVSDWPLLNALLNTAGGATWVSLHHGGGVGMGFSQHSGMVICCDGTEDASARIARVLHNDPATGVMRHADAGYDIAKQCAAQQGLDLPMLNEELSKLK</sequence>